<dbReference type="EMBL" id="CP000259">
    <property type="protein sequence ID" value="ABF31456.1"/>
    <property type="molecule type" value="Genomic_DNA"/>
</dbReference>
<dbReference type="RefSeq" id="WP_002985979.1">
    <property type="nucleotide sequence ID" value="NC_008021.1"/>
</dbReference>
<dbReference type="SMR" id="Q1JNE3"/>
<dbReference type="KEGG" id="spk:MGAS9429_Spy0268"/>
<dbReference type="HOGENOM" id="CLU_062974_2_0_9"/>
<dbReference type="Proteomes" id="UP000002433">
    <property type="component" value="Chromosome"/>
</dbReference>
<dbReference type="GO" id="GO:0005829">
    <property type="term" value="C:cytosol"/>
    <property type="evidence" value="ECO:0007669"/>
    <property type="project" value="TreeGrafter"/>
</dbReference>
<dbReference type="GO" id="GO:0003677">
    <property type="term" value="F:DNA binding"/>
    <property type="evidence" value="ECO:0007669"/>
    <property type="project" value="UniProtKB-UniRule"/>
</dbReference>
<dbReference type="GO" id="GO:0006355">
    <property type="term" value="P:regulation of DNA-templated transcription"/>
    <property type="evidence" value="ECO:0007669"/>
    <property type="project" value="UniProtKB-UniRule"/>
</dbReference>
<dbReference type="FunFam" id="1.10.10.200:FF:000003">
    <property type="entry name" value="Probable transcriptional regulatory protein YeeN"/>
    <property type="match status" value="1"/>
</dbReference>
<dbReference type="FunFam" id="3.30.70.980:FF:000004">
    <property type="entry name" value="Probable transcriptional regulatory protein YeeN"/>
    <property type="match status" value="1"/>
</dbReference>
<dbReference type="Gene3D" id="1.10.10.200">
    <property type="match status" value="1"/>
</dbReference>
<dbReference type="Gene3D" id="3.30.70.980">
    <property type="match status" value="2"/>
</dbReference>
<dbReference type="HAMAP" id="MF_00693">
    <property type="entry name" value="Transcrip_reg_TACO1"/>
    <property type="match status" value="1"/>
</dbReference>
<dbReference type="HAMAP" id="MF_00918">
    <property type="entry name" value="Transcrip_reg_TACO1_YeeN"/>
    <property type="match status" value="1"/>
</dbReference>
<dbReference type="InterPro" id="IPR017856">
    <property type="entry name" value="Integrase-like_N"/>
</dbReference>
<dbReference type="InterPro" id="IPR048300">
    <property type="entry name" value="TACO1_YebC-like_2nd/3rd_dom"/>
</dbReference>
<dbReference type="InterPro" id="IPR049083">
    <property type="entry name" value="TACO1_YebC_N"/>
</dbReference>
<dbReference type="InterPro" id="IPR002876">
    <property type="entry name" value="Transcrip_reg_TACO1-like"/>
</dbReference>
<dbReference type="InterPro" id="IPR026564">
    <property type="entry name" value="Transcrip_reg_TACO1-like_dom3"/>
</dbReference>
<dbReference type="InterPro" id="IPR026562">
    <property type="entry name" value="Transcrip_reg_TACO1_YeeN"/>
</dbReference>
<dbReference type="InterPro" id="IPR029072">
    <property type="entry name" value="YebC-like"/>
</dbReference>
<dbReference type="NCBIfam" id="NF001030">
    <property type="entry name" value="PRK00110.1"/>
    <property type="match status" value="1"/>
</dbReference>
<dbReference type="NCBIfam" id="NF009044">
    <property type="entry name" value="PRK12378.1"/>
    <property type="match status" value="1"/>
</dbReference>
<dbReference type="NCBIfam" id="TIGR01033">
    <property type="entry name" value="YebC/PmpR family DNA-binding transcriptional regulator"/>
    <property type="match status" value="1"/>
</dbReference>
<dbReference type="PANTHER" id="PTHR12532">
    <property type="entry name" value="TRANSLATIONAL ACTIVATOR OF CYTOCHROME C OXIDASE 1"/>
    <property type="match status" value="1"/>
</dbReference>
<dbReference type="PANTHER" id="PTHR12532:SF0">
    <property type="entry name" value="TRANSLATIONAL ACTIVATOR OF CYTOCHROME C OXIDASE 1"/>
    <property type="match status" value="1"/>
</dbReference>
<dbReference type="Pfam" id="PF20772">
    <property type="entry name" value="TACO1_YebC_N"/>
    <property type="match status" value="1"/>
</dbReference>
<dbReference type="Pfam" id="PF01709">
    <property type="entry name" value="Transcrip_reg"/>
    <property type="match status" value="1"/>
</dbReference>
<dbReference type="SUPFAM" id="SSF75625">
    <property type="entry name" value="YebC-like"/>
    <property type="match status" value="1"/>
</dbReference>
<feature type="chain" id="PRO_0000257143" description="Probable transcriptional regulatory protein MGAS9429_Spy0268">
    <location>
        <begin position="1"/>
        <end position="238"/>
    </location>
</feature>
<proteinExistence type="inferred from homology"/>
<keyword id="KW-0963">Cytoplasm</keyword>
<keyword id="KW-0238">DNA-binding</keyword>
<keyword id="KW-0804">Transcription</keyword>
<keyword id="KW-0805">Transcription regulation</keyword>
<protein>
    <recommendedName>
        <fullName evidence="1">Probable transcriptional regulatory protein MGAS9429_Spy0268</fullName>
    </recommendedName>
</protein>
<evidence type="ECO:0000255" key="1">
    <source>
        <dbReference type="HAMAP-Rule" id="MF_00918"/>
    </source>
</evidence>
<comment type="subcellular location">
    <subcellularLocation>
        <location evidence="1">Cytoplasm</location>
    </subcellularLocation>
</comment>
<comment type="similarity">
    <text evidence="1">Belongs to the TACO1 family. YeeN subfamily.</text>
</comment>
<accession>Q1JNE3</accession>
<organism>
    <name type="scientific">Streptococcus pyogenes serotype M12 (strain MGAS9429)</name>
    <dbReference type="NCBI Taxonomy" id="370551"/>
    <lineage>
        <taxon>Bacteria</taxon>
        <taxon>Bacillati</taxon>
        <taxon>Bacillota</taxon>
        <taxon>Bacilli</taxon>
        <taxon>Lactobacillales</taxon>
        <taxon>Streptococcaceae</taxon>
        <taxon>Streptococcus</taxon>
    </lineage>
</organism>
<gene>
    <name type="ordered locus">MGAS9429_Spy0268</name>
</gene>
<reference key="1">
    <citation type="journal article" date="2006" name="Proc. Natl. Acad. Sci. U.S.A.">
        <title>Molecular genetic anatomy of inter- and intraserotype variation in the human bacterial pathogen group A Streptococcus.</title>
        <authorList>
            <person name="Beres S.B."/>
            <person name="Richter E.W."/>
            <person name="Nagiec M.J."/>
            <person name="Sumby P."/>
            <person name="Porcella S.F."/>
            <person name="DeLeo F.R."/>
            <person name="Musser J.M."/>
        </authorList>
    </citation>
    <scope>NUCLEOTIDE SEQUENCE [LARGE SCALE GENOMIC DNA]</scope>
    <source>
        <strain>MGAS9429</strain>
    </source>
</reference>
<sequence length="238" mass="25888">MGRKWANIVAKKTAKDGATSKVYAKFGVEIYVAAKQGEPDPELNTALKFVIDRAKQAQVPKHVIDKAIDKAKGNTDETFVEGRYEGFGPNGSMIIVDTLTSNVNRTAANVRTAYGKNGGNMGASGSVSYLFDKKGVIVFAGDDADSVFEQLLEADVDVDDVEAEEGTITVYTAPTDLHKGIQALRDNGVEEFQVTELEMIPQSEVVLEGDDLETFEKLIDALESDDDVQKVYHNVADF</sequence>
<name>Y268_STRPC</name>